<reference key="1">
    <citation type="journal article" date="2007" name="Appl. Environ. Microbiol.">
        <title>Genome sequence of the cellulolytic gliding bacterium Cytophaga hutchinsonii.</title>
        <authorList>
            <person name="Xie G."/>
            <person name="Bruce D.C."/>
            <person name="Challacombe J.F."/>
            <person name="Chertkov O."/>
            <person name="Detter J.C."/>
            <person name="Gilna P."/>
            <person name="Han C.S."/>
            <person name="Lucas S."/>
            <person name="Misra M."/>
            <person name="Myers G.L."/>
            <person name="Richardson P."/>
            <person name="Tapia R."/>
            <person name="Thayer N."/>
            <person name="Thompson L.S."/>
            <person name="Brettin T.S."/>
            <person name="Henrissat B."/>
            <person name="Wilson D.B."/>
            <person name="McBride M.J."/>
        </authorList>
    </citation>
    <scope>NUCLEOTIDE SEQUENCE [LARGE SCALE GENOMIC DNA]</scope>
    <source>
        <strain>ATCC 33406 / DSM 1761 / JCM 20678 / CIP 103989 / IAM 12607 / NBRC 15051 / NCIMB 9469 / D465</strain>
    </source>
</reference>
<sequence length="539" mass="60038">MSATKYIFVTGGVTSSLGKGIVAASLAKLLQARGFSVTIQKFDPYLNIDPGTLNPYEHGECYVTDDGAETDLDLGHYERFLGTPTSQGNNITTGRIYNTVITKERQGAFLGKTVQVVPHITDEIKRNIQLLGESGKYDIVITEIGGCVGDIESLPFLEAVRQFRWEMGPTDTLVIHLTLVPYLNAAKELKTKPTQHSVKLLSETGIHPDILVCRTEHPLPAELRKKVALFCNVNINSVIESIDAETIYDVPLLMKKEKLDERVLSKLKLSSKNEPDLESWKVFLGKLKNPLSEVNIALVGKYVELPDAYKSISEAFIHAGAMNECKVKIRWISSEQLQKDNLQHHLGFADGILVAPGFGERGLEGKIAAVEFARENNIPFFGICLGMQCAVIEFARNVLGLKDANSTEMNKDTANPVINMMESQKNVTMKGGTMRLGAYPCELTKGSKAHAIYGKSKIMERHRHRYEFNNKYLKQYEKEGMLATGINPETKLVEIVELRDHPFFIGSQFHPELKSTVENPHPIFVKFVKAANDFAKGKK</sequence>
<proteinExistence type="inferred from homology"/>
<keyword id="KW-0067">ATP-binding</keyword>
<keyword id="KW-0315">Glutamine amidotransferase</keyword>
<keyword id="KW-0436">Ligase</keyword>
<keyword id="KW-0460">Magnesium</keyword>
<keyword id="KW-0479">Metal-binding</keyword>
<keyword id="KW-0547">Nucleotide-binding</keyword>
<keyword id="KW-0665">Pyrimidine biosynthesis</keyword>
<keyword id="KW-1185">Reference proteome</keyword>
<evidence type="ECO:0000255" key="1">
    <source>
        <dbReference type="HAMAP-Rule" id="MF_01227"/>
    </source>
</evidence>
<accession>Q11S24</accession>
<gene>
    <name evidence="1" type="primary">pyrG</name>
    <name type="ordered locus">CHU_2536</name>
</gene>
<name>PYRG_CYTH3</name>
<protein>
    <recommendedName>
        <fullName evidence="1">CTP synthase</fullName>
        <ecNumber evidence="1">6.3.4.2</ecNumber>
    </recommendedName>
    <alternativeName>
        <fullName evidence="1">Cytidine 5'-triphosphate synthase</fullName>
    </alternativeName>
    <alternativeName>
        <fullName evidence="1">Cytidine triphosphate synthetase</fullName>
        <shortName evidence="1">CTP synthetase</shortName>
        <shortName evidence="1">CTPS</shortName>
    </alternativeName>
    <alternativeName>
        <fullName evidence="1">UTP--ammonia ligase</fullName>
    </alternativeName>
</protein>
<feature type="chain" id="PRO_0000266102" description="CTP synthase">
    <location>
        <begin position="1"/>
        <end position="539"/>
    </location>
</feature>
<feature type="domain" description="Glutamine amidotransferase type-1" evidence="1">
    <location>
        <begin position="295"/>
        <end position="537"/>
    </location>
</feature>
<feature type="region of interest" description="Amidoligase domain" evidence="1">
    <location>
        <begin position="1"/>
        <end position="269"/>
    </location>
</feature>
<feature type="active site" description="Nucleophile; for glutamine hydrolysis" evidence="1">
    <location>
        <position position="384"/>
    </location>
</feature>
<feature type="active site" evidence="1">
    <location>
        <position position="510"/>
    </location>
</feature>
<feature type="active site" evidence="1">
    <location>
        <position position="512"/>
    </location>
</feature>
<feature type="binding site" evidence="1">
    <location>
        <position position="15"/>
    </location>
    <ligand>
        <name>CTP</name>
        <dbReference type="ChEBI" id="CHEBI:37563"/>
        <note>allosteric inhibitor</note>
    </ligand>
</feature>
<feature type="binding site" evidence="1">
    <location>
        <position position="15"/>
    </location>
    <ligand>
        <name>UTP</name>
        <dbReference type="ChEBI" id="CHEBI:46398"/>
    </ligand>
</feature>
<feature type="binding site" evidence="1">
    <location>
        <begin position="16"/>
        <end position="21"/>
    </location>
    <ligand>
        <name>ATP</name>
        <dbReference type="ChEBI" id="CHEBI:30616"/>
    </ligand>
</feature>
<feature type="binding site" evidence="1">
    <location>
        <position position="56"/>
    </location>
    <ligand>
        <name>L-glutamine</name>
        <dbReference type="ChEBI" id="CHEBI:58359"/>
    </ligand>
</feature>
<feature type="binding site" evidence="1">
    <location>
        <position position="73"/>
    </location>
    <ligand>
        <name>ATP</name>
        <dbReference type="ChEBI" id="CHEBI:30616"/>
    </ligand>
</feature>
<feature type="binding site" evidence="1">
    <location>
        <position position="73"/>
    </location>
    <ligand>
        <name>Mg(2+)</name>
        <dbReference type="ChEBI" id="CHEBI:18420"/>
    </ligand>
</feature>
<feature type="binding site" evidence="1">
    <location>
        <position position="143"/>
    </location>
    <ligand>
        <name>Mg(2+)</name>
        <dbReference type="ChEBI" id="CHEBI:18420"/>
    </ligand>
</feature>
<feature type="binding site" evidence="1">
    <location>
        <begin position="150"/>
        <end position="152"/>
    </location>
    <ligand>
        <name>CTP</name>
        <dbReference type="ChEBI" id="CHEBI:37563"/>
        <note>allosteric inhibitor</note>
    </ligand>
</feature>
<feature type="binding site" evidence="1">
    <location>
        <begin position="190"/>
        <end position="195"/>
    </location>
    <ligand>
        <name>CTP</name>
        <dbReference type="ChEBI" id="CHEBI:37563"/>
        <note>allosteric inhibitor</note>
    </ligand>
</feature>
<feature type="binding site" evidence="1">
    <location>
        <begin position="190"/>
        <end position="195"/>
    </location>
    <ligand>
        <name>UTP</name>
        <dbReference type="ChEBI" id="CHEBI:46398"/>
    </ligand>
</feature>
<feature type="binding site" evidence="1">
    <location>
        <position position="226"/>
    </location>
    <ligand>
        <name>CTP</name>
        <dbReference type="ChEBI" id="CHEBI:37563"/>
        <note>allosteric inhibitor</note>
    </ligand>
</feature>
<feature type="binding site" evidence="1">
    <location>
        <position position="226"/>
    </location>
    <ligand>
        <name>UTP</name>
        <dbReference type="ChEBI" id="CHEBI:46398"/>
    </ligand>
</feature>
<feature type="binding site" evidence="1">
    <location>
        <position position="357"/>
    </location>
    <ligand>
        <name>L-glutamine</name>
        <dbReference type="ChEBI" id="CHEBI:58359"/>
    </ligand>
</feature>
<feature type="binding site" evidence="1">
    <location>
        <begin position="385"/>
        <end position="388"/>
    </location>
    <ligand>
        <name>L-glutamine</name>
        <dbReference type="ChEBI" id="CHEBI:58359"/>
    </ligand>
</feature>
<feature type="binding site" evidence="1">
    <location>
        <position position="408"/>
    </location>
    <ligand>
        <name>L-glutamine</name>
        <dbReference type="ChEBI" id="CHEBI:58359"/>
    </ligand>
</feature>
<feature type="binding site" evidence="1">
    <location>
        <position position="465"/>
    </location>
    <ligand>
        <name>L-glutamine</name>
        <dbReference type="ChEBI" id="CHEBI:58359"/>
    </ligand>
</feature>
<organism>
    <name type="scientific">Cytophaga hutchinsonii (strain ATCC 33406 / DSM 1761 / CIP 103989 / NBRC 15051 / NCIMB 9469 / D465)</name>
    <dbReference type="NCBI Taxonomy" id="269798"/>
    <lineage>
        <taxon>Bacteria</taxon>
        <taxon>Pseudomonadati</taxon>
        <taxon>Bacteroidota</taxon>
        <taxon>Cytophagia</taxon>
        <taxon>Cytophagales</taxon>
        <taxon>Cytophagaceae</taxon>
        <taxon>Cytophaga</taxon>
    </lineage>
</organism>
<dbReference type="EC" id="6.3.4.2" evidence="1"/>
<dbReference type="EMBL" id="CP000383">
    <property type="protein sequence ID" value="ABG59790.1"/>
    <property type="molecule type" value="Genomic_DNA"/>
</dbReference>
<dbReference type="RefSeq" id="WP_011585904.1">
    <property type="nucleotide sequence ID" value="NC_008255.1"/>
</dbReference>
<dbReference type="SMR" id="Q11S24"/>
<dbReference type="STRING" id="269798.CHU_2536"/>
<dbReference type="KEGG" id="chu:CHU_2536"/>
<dbReference type="eggNOG" id="COG0504">
    <property type="taxonomic scope" value="Bacteria"/>
</dbReference>
<dbReference type="HOGENOM" id="CLU_011675_5_0_10"/>
<dbReference type="OrthoDB" id="9801107at2"/>
<dbReference type="UniPathway" id="UPA00159">
    <property type="reaction ID" value="UER00277"/>
</dbReference>
<dbReference type="Proteomes" id="UP000001822">
    <property type="component" value="Chromosome"/>
</dbReference>
<dbReference type="GO" id="GO:0005829">
    <property type="term" value="C:cytosol"/>
    <property type="evidence" value="ECO:0007669"/>
    <property type="project" value="TreeGrafter"/>
</dbReference>
<dbReference type="GO" id="GO:0005524">
    <property type="term" value="F:ATP binding"/>
    <property type="evidence" value="ECO:0007669"/>
    <property type="project" value="UniProtKB-KW"/>
</dbReference>
<dbReference type="GO" id="GO:0003883">
    <property type="term" value="F:CTP synthase activity"/>
    <property type="evidence" value="ECO:0007669"/>
    <property type="project" value="UniProtKB-UniRule"/>
</dbReference>
<dbReference type="GO" id="GO:0004359">
    <property type="term" value="F:glutaminase activity"/>
    <property type="evidence" value="ECO:0007669"/>
    <property type="project" value="RHEA"/>
</dbReference>
<dbReference type="GO" id="GO:0042802">
    <property type="term" value="F:identical protein binding"/>
    <property type="evidence" value="ECO:0007669"/>
    <property type="project" value="TreeGrafter"/>
</dbReference>
<dbReference type="GO" id="GO:0046872">
    <property type="term" value="F:metal ion binding"/>
    <property type="evidence" value="ECO:0007669"/>
    <property type="project" value="UniProtKB-KW"/>
</dbReference>
<dbReference type="GO" id="GO:0044210">
    <property type="term" value="P:'de novo' CTP biosynthetic process"/>
    <property type="evidence" value="ECO:0007669"/>
    <property type="project" value="UniProtKB-UniRule"/>
</dbReference>
<dbReference type="GO" id="GO:0019856">
    <property type="term" value="P:pyrimidine nucleobase biosynthetic process"/>
    <property type="evidence" value="ECO:0007669"/>
    <property type="project" value="TreeGrafter"/>
</dbReference>
<dbReference type="CDD" id="cd03113">
    <property type="entry name" value="CTPS_N"/>
    <property type="match status" value="1"/>
</dbReference>
<dbReference type="CDD" id="cd01746">
    <property type="entry name" value="GATase1_CTP_Synthase"/>
    <property type="match status" value="1"/>
</dbReference>
<dbReference type="FunFam" id="3.40.50.300:FF:000009">
    <property type="entry name" value="CTP synthase"/>
    <property type="match status" value="1"/>
</dbReference>
<dbReference type="FunFam" id="3.40.50.880:FF:000002">
    <property type="entry name" value="CTP synthase"/>
    <property type="match status" value="1"/>
</dbReference>
<dbReference type="Gene3D" id="3.40.50.880">
    <property type="match status" value="1"/>
</dbReference>
<dbReference type="Gene3D" id="3.40.50.300">
    <property type="entry name" value="P-loop containing nucleotide triphosphate hydrolases"/>
    <property type="match status" value="1"/>
</dbReference>
<dbReference type="HAMAP" id="MF_01227">
    <property type="entry name" value="PyrG"/>
    <property type="match status" value="1"/>
</dbReference>
<dbReference type="InterPro" id="IPR029062">
    <property type="entry name" value="Class_I_gatase-like"/>
</dbReference>
<dbReference type="InterPro" id="IPR004468">
    <property type="entry name" value="CTP_synthase"/>
</dbReference>
<dbReference type="InterPro" id="IPR017456">
    <property type="entry name" value="CTP_synthase_N"/>
</dbReference>
<dbReference type="InterPro" id="IPR017926">
    <property type="entry name" value="GATASE"/>
</dbReference>
<dbReference type="InterPro" id="IPR033828">
    <property type="entry name" value="GATase1_CTP_Synthase"/>
</dbReference>
<dbReference type="InterPro" id="IPR027417">
    <property type="entry name" value="P-loop_NTPase"/>
</dbReference>
<dbReference type="NCBIfam" id="NF003792">
    <property type="entry name" value="PRK05380.1"/>
    <property type="match status" value="1"/>
</dbReference>
<dbReference type="NCBIfam" id="TIGR00337">
    <property type="entry name" value="PyrG"/>
    <property type="match status" value="1"/>
</dbReference>
<dbReference type="PANTHER" id="PTHR11550">
    <property type="entry name" value="CTP SYNTHASE"/>
    <property type="match status" value="1"/>
</dbReference>
<dbReference type="PANTHER" id="PTHR11550:SF0">
    <property type="entry name" value="CTP SYNTHASE-RELATED"/>
    <property type="match status" value="1"/>
</dbReference>
<dbReference type="Pfam" id="PF06418">
    <property type="entry name" value="CTP_synth_N"/>
    <property type="match status" value="1"/>
</dbReference>
<dbReference type="Pfam" id="PF00117">
    <property type="entry name" value="GATase"/>
    <property type="match status" value="1"/>
</dbReference>
<dbReference type="SUPFAM" id="SSF52317">
    <property type="entry name" value="Class I glutamine amidotransferase-like"/>
    <property type="match status" value="1"/>
</dbReference>
<dbReference type="SUPFAM" id="SSF52540">
    <property type="entry name" value="P-loop containing nucleoside triphosphate hydrolases"/>
    <property type="match status" value="1"/>
</dbReference>
<dbReference type="PROSITE" id="PS51273">
    <property type="entry name" value="GATASE_TYPE_1"/>
    <property type="match status" value="1"/>
</dbReference>
<comment type="function">
    <text evidence="1">Catalyzes the ATP-dependent amination of UTP to CTP with either L-glutamine or ammonia as the source of nitrogen. Regulates intracellular CTP levels through interactions with the four ribonucleotide triphosphates.</text>
</comment>
<comment type="catalytic activity">
    <reaction evidence="1">
        <text>UTP + L-glutamine + ATP + H2O = CTP + L-glutamate + ADP + phosphate + 2 H(+)</text>
        <dbReference type="Rhea" id="RHEA:26426"/>
        <dbReference type="ChEBI" id="CHEBI:15377"/>
        <dbReference type="ChEBI" id="CHEBI:15378"/>
        <dbReference type="ChEBI" id="CHEBI:29985"/>
        <dbReference type="ChEBI" id="CHEBI:30616"/>
        <dbReference type="ChEBI" id="CHEBI:37563"/>
        <dbReference type="ChEBI" id="CHEBI:43474"/>
        <dbReference type="ChEBI" id="CHEBI:46398"/>
        <dbReference type="ChEBI" id="CHEBI:58359"/>
        <dbReference type="ChEBI" id="CHEBI:456216"/>
        <dbReference type="EC" id="6.3.4.2"/>
    </reaction>
</comment>
<comment type="catalytic activity">
    <reaction evidence="1">
        <text>L-glutamine + H2O = L-glutamate + NH4(+)</text>
        <dbReference type="Rhea" id="RHEA:15889"/>
        <dbReference type="ChEBI" id="CHEBI:15377"/>
        <dbReference type="ChEBI" id="CHEBI:28938"/>
        <dbReference type="ChEBI" id="CHEBI:29985"/>
        <dbReference type="ChEBI" id="CHEBI:58359"/>
    </reaction>
</comment>
<comment type="catalytic activity">
    <reaction evidence="1">
        <text>UTP + NH4(+) + ATP = CTP + ADP + phosphate + 2 H(+)</text>
        <dbReference type="Rhea" id="RHEA:16597"/>
        <dbReference type="ChEBI" id="CHEBI:15378"/>
        <dbReference type="ChEBI" id="CHEBI:28938"/>
        <dbReference type="ChEBI" id="CHEBI:30616"/>
        <dbReference type="ChEBI" id="CHEBI:37563"/>
        <dbReference type="ChEBI" id="CHEBI:43474"/>
        <dbReference type="ChEBI" id="CHEBI:46398"/>
        <dbReference type="ChEBI" id="CHEBI:456216"/>
    </reaction>
</comment>
<comment type="activity regulation">
    <text evidence="1">Allosterically activated by GTP, when glutamine is the substrate; GTP has no effect on the reaction when ammonia is the substrate. The allosteric effector GTP functions by stabilizing the protein conformation that binds the tetrahedral intermediate(s) formed during glutamine hydrolysis. Inhibited by the product CTP, via allosteric rather than competitive inhibition.</text>
</comment>
<comment type="pathway">
    <text evidence="1">Pyrimidine metabolism; CTP biosynthesis via de novo pathway; CTP from UDP: step 2/2.</text>
</comment>
<comment type="subunit">
    <text evidence="1">Homotetramer.</text>
</comment>
<comment type="miscellaneous">
    <text evidence="1">CTPSs have evolved a hybrid strategy for distinguishing between UTP and CTP. The overlapping regions of the product feedback inhibitory and substrate sites recognize a common feature in both compounds, the triphosphate moiety. To differentiate isosteric substrate and product pyrimidine rings, an additional pocket far from the expected kinase/ligase catalytic site, specifically recognizes the cytosine and ribose portions of the product inhibitor.</text>
</comment>
<comment type="similarity">
    <text evidence="1">Belongs to the CTP synthase family.</text>
</comment>